<protein>
    <recommendedName>
        <fullName evidence="1">Large ribosomal subunit protein uL1</fullName>
    </recommendedName>
    <alternativeName>
        <fullName evidence="2">50S ribosomal protein L1</fullName>
    </alternativeName>
</protein>
<name>RL1_PHOLL</name>
<gene>
    <name evidence="1" type="primary">rplA</name>
    <name type="ordered locus">plu0436</name>
</gene>
<organism>
    <name type="scientific">Photorhabdus laumondii subsp. laumondii (strain DSM 15139 / CIP 105565 / TT01)</name>
    <name type="common">Photorhabdus luminescens subsp. laumondii</name>
    <dbReference type="NCBI Taxonomy" id="243265"/>
    <lineage>
        <taxon>Bacteria</taxon>
        <taxon>Pseudomonadati</taxon>
        <taxon>Pseudomonadota</taxon>
        <taxon>Gammaproteobacteria</taxon>
        <taxon>Enterobacterales</taxon>
        <taxon>Morganellaceae</taxon>
        <taxon>Photorhabdus</taxon>
    </lineage>
</organism>
<keyword id="KW-1185">Reference proteome</keyword>
<keyword id="KW-0678">Repressor</keyword>
<keyword id="KW-0687">Ribonucleoprotein</keyword>
<keyword id="KW-0689">Ribosomal protein</keyword>
<keyword id="KW-0694">RNA-binding</keyword>
<keyword id="KW-0699">rRNA-binding</keyword>
<keyword id="KW-0810">Translation regulation</keyword>
<keyword id="KW-0820">tRNA-binding</keyword>
<feature type="chain" id="PRO_0000125706" description="Large ribosomal subunit protein uL1">
    <location>
        <begin position="1"/>
        <end position="233"/>
    </location>
</feature>
<sequence>MAKLTKRMRTIREKVDATKQYDINEAVVLLKELATAKFVESVDVAVNLGIDARKSDQNVRGATVLPHGTGRSVRVAVFTQGANAEAAKAAGAELVGMEDLAELVKKGEMDFDVVIASPDAMRVVGQLGQILGPRGLMPNPKVGTVTPNVAEAVQNAKAGQVRYRNDKNGIIHTTIGKVDFDADKLKENLEALLVALKKGKPSSAKGIYIKKVSLSTTMGAGVAIDQSGLNASA</sequence>
<comment type="function">
    <text evidence="1">Binds directly to 23S rRNA. The L1 stalk is quite mobile in the ribosome, and is involved in E site tRNA release.</text>
</comment>
<comment type="function">
    <text evidence="1">Protein L1 is also a translational repressor protein, it controls the translation of the L11 operon by binding to its mRNA.</text>
</comment>
<comment type="subunit">
    <text evidence="1">Part of the 50S ribosomal subunit.</text>
</comment>
<comment type="similarity">
    <text evidence="1">Belongs to the universal ribosomal protein uL1 family.</text>
</comment>
<accession>Q7N9A7</accession>
<dbReference type="EMBL" id="BX571860">
    <property type="protein sequence ID" value="CAE12731.1"/>
    <property type="molecule type" value="Genomic_DNA"/>
</dbReference>
<dbReference type="RefSeq" id="WP_011144822.1">
    <property type="nucleotide sequence ID" value="NC_005126.1"/>
</dbReference>
<dbReference type="SMR" id="Q7N9A7"/>
<dbReference type="STRING" id="243265.plu0436"/>
<dbReference type="GeneID" id="48846722"/>
<dbReference type="KEGG" id="plu:plu0436"/>
<dbReference type="eggNOG" id="COG0081">
    <property type="taxonomic scope" value="Bacteria"/>
</dbReference>
<dbReference type="HOGENOM" id="CLU_062853_0_0_6"/>
<dbReference type="OrthoDB" id="9803740at2"/>
<dbReference type="Proteomes" id="UP000002514">
    <property type="component" value="Chromosome"/>
</dbReference>
<dbReference type="GO" id="GO:0022625">
    <property type="term" value="C:cytosolic large ribosomal subunit"/>
    <property type="evidence" value="ECO:0007669"/>
    <property type="project" value="TreeGrafter"/>
</dbReference>
<dbReference type="GO" id="GO:0019843">
    <property type="term" value="F:rRNA binding"/>
    <property type="evidence" value="ECO:0007669"/>
    <property type="project" value="UniProtKB-UniRule"/>
</dbReference>
<dbReference type="GO" id="GO:0003735">
    <property type="term" value="F:structural constituent of ribosome"/>
    <property type="evidence" value="ECO:0007669"/>
    <property type="project" value="InterPro"/>
</dbReference>
<dbReference type="GO" id="GO:0000049">
    <property type="term" value="F:tRNA binding"/>
    <property type="evidence" value="ECO:0007669"/>
    <property type="project" value="UniProtKB-KW"/>
</dbReference>
<dbReference type="GO" id="GO:0006417">
    <property type="term" value="P:regulation of translation"/>
    <property type="evidence" value="ECO:0007669"/>
    <property type="project" value="UniProtKB-KW"/>
</dbReference>
<dbReference type="GO" id="GO:0006412">
    <property type="term" value="P:translation"/>
    <property type="evidence" value="ECO:0007669"/>
    <property type="project" value="UniProtKB-UniRule"/>
</dbReference>
<dbReference type="CDD" id="cd00403">
    <property type="entry name" value="Ribosomal_L1"/>
    <property type="match status" value="1"/>
</dbReference>
<dbReference type="FunFam" id="3.40.50.790:FF:000001">
    <property type="entry name" value="50S ribosomal protein L1"/>
    <property type="match status" value="1"/>
</dbReference>
<dbReference type="Gene3D" id="3.30.190.20">
    <property type="match status" value="1"/>
</dbReference>
<dbReference type="Gene3D" id="3.40.50.790">
    <property type="match status" value="1"/>
</dbReference>
<dbReference type="HAMAP" id="MF_01318_B">
    <property type="entry name" value="Ribosomal_uL1_B"/>
    <property type="match status" value="1"/>
</dbReference>
<dbReference type="InterPro" id="IPR005878">
    <property type="entry name" value="Ribosom_uL1_bac-type"/>
</dbReference>
<dbReference type="InterPro" id="IPR002143">
    <property type="entry name" value="Ribosomal_uL1"/>
</dbReference>
<dbReference type="InterPro" id="IPR023674">
    <property type="entry name" value="Ribosomal_uL1-like"/>
</dbReference>
<dbReference type="InterPro" id="IPR028364">
    <property type="entry name" value="Ribosomal_uL1/biogenesis"/>
</dbReference>
<dbReference type="InterPro" id="IPR016095">
    <property type="entry name" value="Ribosomal_uL1_3-a/b-sand"/>
</dbReference>
<dbReference type="InterPro" id="IPR023673">
    <property type="entry name" value="Ribosomal_uL1_CS"/>
</dbReference>
<dbReference type="NCBIfam" id="TIGR01169">
    <property type="entry name" value="rplA_bact"/>
    <property type="match status" value="1"/>
</dbReference>
<dbReference type="PANTHER" id="PTHR36427">
    <property type="entry name" value="54S RIBOSOMAL PROTEIN L1, MITOCHONDRIAL"/>
    <property type="match status" value="1"/>
</dbReference>
<dbReference type="PANTHER" id="PTHR36427:SF3">
    <property type="entry name" value="LARGE RIBOSOMAL SUBUNIT PROTEIN UL1M"/>
    <property type="match status" value="1"/>
</dbReference>
<dbReference type="Pfam" id="PF00687">
    <property type="entry name" value="Ribosomal_L1"/>
    <property type="match status" value="1"/>
</dbReference>
<dbReference type="PIRSF" id="PIRSF002155">
    <property type="entry name" value="Ribosomal_L1"/>
    <property type="match status" value="1"/>
</dbReference>
<dbReference type="SUPFAM" id="SSF56808">
    <property type="entry name" value="Ribosomal protein L1"/>
    <property type="match status" value="1"/>
</dbReference>
<dbReference type="PROSITE" id="PS01199">
    <property type="entry name" value="RIBOSOMAL_L1"/>
    <property type="match status" value="1"/>
</dbReference>
<proteinExistence type="inferred from homology"/>
<evidence type="ECO:0000255" key="1">
    <source>
        <dbReference type="HAMAP-Rule" id="MF_01318"/>
    </source>
</evidence>
<evidence type="ECO:0000305" key="2"/>
<reference key="1">
    <citation type="journal article" date="2003" name="Nat. Biotechnol.">
        <title>The genome sequence of the entomopathogenic bacterium Photorhabdus luminescens.</title>
        <authorList>
            <person name="Duchaud E."/>
            <person name="Rusniok C."/>
            <person name="Frangeul L."/>
            <person name="Buchrieser C."/>
            <person name="Givaudan A."/>
            <person name="Taourit S."/>
            <person name="Bocs S."/>
            <person name="Boursaux-Eude C."/>
            <person name="Chandler M."/>
            <person name="Charles J.-F."/>
            <person name="Dassa E."/>
            <person name="Derose R."/>
            <person name="Derzelle S."/>
            <person name="Freyssinet G."/>
            <person name="Gaudriault S."/>
            <person name="Medigue C."/>
            <person name="Lanois A."/>
            <person name="Powell K."/>
            <person name="Siguier P."/>
            <person name="Vincent R."/>
            <person name="Wingate V."/>
            <person name="Zouine M."/>
            <person name="Glaser P."/>
            <person name="Boemare N."/>
            <person name="Danchin A."/>
            <person name="Kunst F."/>
        </authorList>
    </citation>
    <scope>NUCLEOTIDE SEQUENCE [LARGE SCALE GENOMIC DNA]</scope>
    <source>
        <strain>DSM 15139 / CIP 105565 / TT01</strain>
    </source>
</reference>